<feature type="chain" id="PRO_0000337294" description="Plasma membrane fusion protein PRM1">
    <location>
        <begin position="1"/>
        <end position="661"/>
    </location>
</feature>
<feature type="topological domain" description="Extracellular" evidence="1">
    <location>
        <begin position="1"/>
        <end position="16"/>
    </location>
</feature>
<feature type="transmembrane region" description="Helical" evidence="2">
    <location>
        <begin position="17"/>
        <end position="37"/>
    </location>
</feature>
<feature type="topological domain" description="Cytoplasmic" evidence="1">
    <location>
        <begin position="38"/>
        <end position="105"/>
    </location>
</feature>
<feature type="transmembrane region" description="Helical" evidence="2">
    <location>
        <begin position="106"/>
        <end position="126"/>
    </location>
</feature>
<feature type="topological domain" description="Extracellular" evidence="1">
    <location>
        <begin position="127"/>
        <end position="296"/>
    </location>
</feature>
<feature type="transmembrane region" description="Helical" evidence="2">
    <location>
        <begin position="297"/>
        <end position="317"/>
    </location>
</feature>
<feature type="topological domain" description="Cytoplasmic" evidence="1">
    <location>
        <begin position="318"/>
        <end position="424"/>
    </location>
</feature>
<feature type="transmembrane region" description="Helical" evidence="2">
    <location>
        <begin position="425"/>
        <end position="445"/>
    </location>
</feature>
<feature type="topological domain" description="Extracellular" evidence="1">
    <location>
        <begin position="446"/>
        <end position="629"/>
    </location>
</feature>
<feature type="transmembrane region" description="Helical" evidence="2">
    <location>
        <begin position="630"/>
        <end position="650"/>
    </location>
</feature>
<feature type="topological domain" description="Cytoplasmic" evidence="1">
    <location>
        <begin position="651"/>
        <end position="661"/>
    </location>
</feature>
<feature type="glycosylation site" description="N-linked (GlcNAc...) asparagine" evidence="2">
    <location>
        <position position="135"/>
    </location>
</feature>
<feature type="glycosylation site" description="N-linked (GlcNAc...) asparagine" evidence="2">
    <location>
        <position position="145"/>
    </location>
</feature>
<feature type="glycosylation site" description="N-linked (GlcNAc...) asparagine" evidence="2">
    <location>
        <position position="188"/>
    </location>
</feature>
<feature type="glycosylation site" description="N-linked (GlcNAc...) asparagine" evidence="2">
    <location>
        <position position="197"/>
    </location>
</feature>
<feature type="glycosylation site" description="N-linked (GlcNAc...) asparagine" evidence="2">
    <location>
        <position position="231"/>
    </location>
</feature>
<feature type="glycosylation site" description="N-linked (GlcNAc...) asparagine" evidence="2">
    <location>
        <position position="252"/>
    </location>
</feature>
<feature type="glycosylation site" description="N-linked (GlcNAc...) asparagine" evidence="2">
    <location>
        <position position="272"/>
    </location>
</feature>
<feature type="glycosylation site" description="N-linked (GlcNAc...) asparagine" evidence="2">
    <location>
        <position position="280"/>
    </location>
</feature>
<feature type="glycosylation site" description="N-linked (GlcNAc...) asparagine" evidence="2">
    <location>
        <position position="490"/>
    </location>
</feature>
<feature type="glycosylation site" description="N-linked (GlcNAc...) asparagine" evidence="2">
    <location>
        <position position="505"/>
    </location>
</feature>
<feature type="glycosylation site" description="N-linked (GlcNAc...) asparagine" evidence="2">
    <location>
        <position position="512"/>
    </location>
</feature>
<feature type="glycosylation site" description="N-linked (GlcNAc...) asparagine" evidence="2">
    <location>
        <position position="531"/>
    </location>
</feature>
<feature type="glycosylation site" description="N-linked (GlcNAc...) asparagine" evidence="2">
    <location>
        <position position="573"/>
    </location>
</feature>
<feature type="glycosylation site" description="N-linked (GlcNAc...) asparagine" evidence="2">
    <location>
        <position position="587"/>
    </location>
</feature>
<reference key="1">
    <citation type="journal article" date="2007" name="Proc. Natl. Acad. Sci. U.S.A.">
        <title>Genome sequencing and comparative analysis of Saccharomyces cerevisiae strain YJM789.</title>
        <authorList>
            <person name="Wei W."/>
            <person name="McCusker J.H."/>
            <person name="Hyman R.W."/>
            <person name="Jones T."/>
            <person name="Ning Y."/>
            <person name="Cao Z."/>
            <person name="Gu Z."/>
            <person name="Bruno D."/>
            <person name="Miranda M."/>
            <person name="Nguyen M."/>
            <person name="Wilhelmy J."/>
            <person name="Komp C."/>
            <person name="Tamse R."/>
            <person name="Wang X."/>
            <person name="Jia P."/>
            <person name="Luedi P."/>
            <person name="Oefner P.J."/>
            <person name="David L."/>
            <person name="Dietrich F.S."/>
            <person name="Li Y."/>
            <person name="Davis R.W."/>
            <person name="Steinmetz L.M."/>
        </authorList>
    </citation>
    <scope>NUCLEOTIDE SEQUENCE [LARGE SCALE GENOMIC DNA]</scope>
    <source>
        <strain>YJM789</strain>
    </source>
</reference>
<proteinExistence type="inferred from homology"/>
<name>PRM1_YEAS7</name>
<accession>A6ZRG6</accession>
<organism>
    <name type="scientific">Saccharomyces cerevisiae (strain YJM789)</name>
    <name type="common">Baker's yeast</name>
    <dbReference type="NCBI Taxonomy" id="307796"/>
    <lineage>
        <taxon>Eukaryota</taxon>
        <taxon>Fungi</taxon>
        <taxon>Dikarya</taxon>
        <taxon>Ascomycota</taxon>
        <taxon>Saccharomycotina</taxon>
        <taxon>Saccharomycetes</taxon>
        <taxon>Saccharomycetales</taxon>
        <taxon>Saccharomycetaceae</taxon>
        <taxon>Saccharomyces</taxon>
    </lineage>
</organism>
<dbReference type="EMBL" id="AAFW02000067">
    <property type="protein sequence ID" value="EDN62548.1"/>
    <property type="molecule type" value="Genomic_DNA"/>
</dbReference>
<dbReference type="GlyCosmos" id="A6ZRG6">
    <property type="glycosylation" value="14 sites, No reported glycans"/>
</dbReference>
<dbReference type="HOGENOM" id="CLU_010191_1_0_1"/>
<dbReference type="Proteomes" id="UP000007060">
    <property type="component" value="Unassembled WGS sequence"/>
</dbReference>
<dbReference type="GO" id="GO:0043332">
    <property type="term" value="C:mating projection tip"/>
    <property type="evidence" value="ECO:0007669"/>
    <property type="project" value="InterPro"/>
</dbReference>
<dbReference type="GO" id="GO:0005886">
    <property type="term" value="C:plasma membrane"/>
    <property type="evidence" value="ECO:0007669"/>
    <property type="project" value="UniProtKB-SubCell"/>
</dbReference>
<dbReference type="GO" id="GO:0032220">
    <property type="term" value="P:plasma membrane fusion involved in cytogamy"/>
    <property type="evidence" value="ECO:0007669"/>
    <property type="project" value="TreeGrafter"/>
</dbReference>
<dbReference type="InterPro" id="IPR026777">
    <property type="entry name" value="PRM1"/>
</dbReference>
<dbReference type="PANTHER" id="PTHR31030">
    <property type="entry name" value="PLASMA MEMBRANE FUSION PROTEIN PRM1"/>
    <property type="match status" value="1"/>
</dbReference>
<dbReference type="PANTHER" id="PTHR31030:SF1">
    <property type="entry name" value="PLASMA MEMBRANE FUSION PROTEIN PRM1"/>
    <property type="match status" value="1"/>
</dbReference>
<gene>
    <name type="primary">PRM1</name>
    <name type="ORF">SCY_4527</name>
</gene>
<protein>
    <recommendedName>
        <fullName>Plasma membrane fusion protein PRM1</fullName>
    </recommendedName>
    <alternativeName>
        <fullName>Pheromone-regulated membrane protein 1</fullName>
    </alternativeName>
</protein>
<keyword id="KW-1003">Cell membrane</keyword>
<keyword id="KW-0184">Conjugation</keyword>
<keyword id="KW-0325">Glycoprotein</keyword>
<keyword id="KW-0472">Membrane</keyword>
<keyword id="KW-0812">Transmembrane</keyword>
<keyword id="KW-1133">Transmembrane helix</keyword>
<comment type="function">
    <text evidence="1">Involved in cell fusion during mating by stabilizing the plasma membrane fusion event.</text>
</comment>
<comment type="subcellular location">
    <subcellularLocation>
        <location evidence="1">Cell membrane</location>
        <topology evidence="1">Multi-pass membrane protein</topology>
    </subcellularLocation>
    <text evidence="1">Localizes at sites of cell fusion during mating.</text>
</comment>
<comment type="induction">
    <text evidence="1">By pheromones during mating, through the regulation by the STE12 transcription factor. Also induced in respiratory-deficient cells (By similarity).</text>
</comment>
<comment type="similarity">
    <text evidence="3">Belongs to the PRM1 family.</text>
</comment>
<evidence type="ECO:0000250" key="1"/>
<evidence type="ECO:0000255" key="2"/>
<evidence type="ECO:0000305" key="3"/>
<sequence>MSGFKCYLQLGDRLSQIWLNKYTLVLLLAMLKLLFFSKSIQHAIEVSETYILSNCYSIDSLYSKMTDNTPHYLGIMGNYLIEKGMEETVKATLETLSLIVYASEGLVNFAIDLYLGTYACLIVSAVDGTVDVATNTTEKLISLVNDTVSSVANELDTGLNDISKIINKVIKAASKVENFFTGDDDDSNMTSSIKSVNLTISALHNLYIPSSINDKLEELSAKTPDFAQVKNTTKNLISVPFNEVRKNIKAVNASNIIGDTSVLYVPPVSLDNSTGICSSNQSEILAFYSILGQVLKIATVVCITVLICFAVGAMAPVAWNEIKLWRRLCGMRDHYMLSRQDSYTSFSSENTHELKDPFRDPPIQNGQYDVIASYQQCFQTWNTRIAGWMTNLVTFGKSPENIDPKTKQKIEWVVAYMTSERALCVLGIGLLGILVCICQFVMIALLKHKISHSLTSNDGDGVQNLLKSSTAVDIENQMSLWSVQTNKYINTTETNINQEVFGWINTTTLSVNNTVATMISDIDTTLADVFNGTLLYNPMKTVVGCAIENKLYTIEKAMTWIHDKAQLHIPRINGTQIKQALAKQADNSTIPTASSTSAATENLLENLVNDMREGLLKILRAYHRITLGELTVALVILAVWLVQLPIALVILRLRLRKATFD</sequence>